<protein>
    <recommendedName>
        <fullName>Mannonate dehydratase</fullName>
        <ecNumber>4.2.1.8</ecNumber>
    </recommendedName>
    <alternativeName>
        <fullName>D-mannonate hydro-lyase</fullName>
    </alternativeName>
</protein>
<accession>P24215</accession>
<accession>O87739</accession>
<accession>Q2M5Z1</accession>
<name>UXUA_ECOLI</name>
<dbReference type="EC" id="4.2.1.8"/>
<dbReference type="EMBL" id="D13329">
    <property type="protein sequence ID" value="BAA02590.1"/>
    <property type="molecule type" value="Genomic_DNA"/>
</dbReference>
<dbReference type="EMBL" id="U14003">
    <property type="protein sequence ID" value="AAA97218.1"/>
    <property type="molecule type" value="Genomic_DNA"/>
</dbReference>
<dbReference type="EMBL" id="U00096">
    <property type="protein sequence ID" value="AAC77278.1"/>
    <property type="molecule type" value="Genomic_DNA"/>
</dbReference>
<dbReference type="EMBL" id="AP009048">
    <property type="protein sequence ID" value="BAE78315.1"/>
    <property type="molecule type" value="Genomic_DNA"/>
</dbReference>
<dbReference type="EMBL" id="AJ225176">
    <property type="protein sequence ID" value="CAA12424.1"/>
    <property type="molecule type" value="Genomic_DNA"/>
</dbReference>
<dbReference type="EMBL" id="X03411">
    <property type="protein sequence ID" value="CAA27147.1"/>
    <property type="status" value="ALT_TERM"/>
    <property type="molecule type" value="Genomic_DNA"/>
</dbReference>
<dbReference type="EMBL" id="X91735">
    <property type="protein sequence ID" value="CAA62860.1"/>
    <property type="molecule type" value="Genomic_DNA"/>
</dbReference>
<dbReference type="PIR" id="I57745">
    <property type="entry name" value="I57745"/>
</dbReference>
<dbReference type="PIR" id="S56547">
    <property type="entry name" value="S56547"/>
</dbReference>
<dbReference type="RefSeq" id="NP_418742.1">
    <property type="nucleotide sequence ID" value="NC_000913.3"/>
</dbReference>
<dbReference type="RefSeq" id="WP_000438562.1">
    <property type="nucleotide sequence ID" value="NZ_SSUV01000012.1"/>
</dbReference>
<dbReference type="PDB" id="4EAC">
    <property type="method" value="X-ray"/>
    <property type="resolution" value="2.30 A"/>
    <property type="chains" value="A/B/C/D=1-394"/>
</dbReference>
<dbReference type="PDB" id="4EAY">
    <property type="method" value="X-ray"/>
    <property type="resolution" value="2.35 A"/>
    <property type="chains" value="A/B/C/D=1-394"/>
</dbReference>
<dbReference type="PDBsum" id="4EAC"/>
<dbReference type="PDBsum" id="4EAY"/>
<dbReference type="SMR" id="P24215"/>
<dbReference type="BioGRID" id="4261003">
    <property type="interactions" value="17"/>
</dbReference>
<dbReference type="DIP" id="DIP-11108N"/>
<dbReference type="FunCoup" id="P24215">
    <property type="interactions" value="197"/>
</dbReference>
<dbReference type="IntAct" id="P24215">
    <property type="interactions" value="2"/>
</dbReference>
<dbReference type="STRING" id="511145.b4322"/>
<dbReference type="jPOST" id="P24215"/>
<dbReference type="PaxDb" id="511145-b4322"/>
<dbReference type="EnsemblBacteria" id="AAC77278">
    <property type="protein sequence ID" value="AAC77278"/>
    <property type="gene ID" value="b4322"/>
</dbReference>
<dbReference type="GeneID" id="947082"/>
<dbReference type="KEGG" id="ecj:JW4285"/>
<dbReference type="KEGG" id="eco:b4322"/>
<dbReference type="KEGG" id="ecoc:C3026_23350"/>
<dbReference type="PATRIC" id="fig|1411691.4.peg.2370"/>
<dbReference type="EchoBASE" id="EB1059"/>
<dbReference type="eggNOG" id="COG1312">
    <property type="taxonomic scope" value="Bacteria"/>
</dbReference>
<dbReference type="HOGENOM" id="CLU_058621_2_0_6"/>
<dbReference type="InParanoid" id="P24215"/>
<dbReference type="OMA" id="ANHLEGD"/>
<dbReference type="OrthoDB" id="9780250at2"/>
<dbReference type="PhylomeDB" id="P24215"/>
<dbReference type="BioCyc" id="EcoCyc:MANNONDEHYDRAT-MONOMER"/>
<dbReference type="BioCyc" id="MetaCyc:MANNONDEHYDRAT-MONOMER"/>
<dbReference type="BRENDA" id="4.2.1.8">
    <property type="organism ID" value="2026"/>
</dbReference>
<dbReference type="UniPathway" id="UPA00246"/>
<dbReference type="EvolutionaryTrace" id="P24215"/>
<dbReference type="PRO" id="PR:P24215"/>
<dbReference type="Proteomes" id="UP000000625">
    <property type="component" value="Chromosome"/>
</dbReference>
<dbReference type="GO" id="GO:0008198">
    <property type="term" value="F:ferrous iron binding"/>
    <property type="evidence" value="ECO:0000314"/>
    <property type="project" value="EcoCyc"/>
</dbReference>
<dbReference type="GO" id="GO:0030145">
    <property type="term" value="F:manganese ion binding"/>
    <property type="evidence" value="ECO:0000314"/>
    <property type="project" value="EcoCyc"/>
</dbReference>
<dbReference type="GO" id="GO:0008927">
    <property type="term" value="F:mannonate dehydratase activity"/>
    <property type="evidence" value="ECO:0000314"/>
    <property type="project" value="EcoCyc"/>
</dbReference>
<dbReference type="GO" id="GO:0042840">
    <property type="term" value="P:D-glucuronate catabolic process"/>
    <property type="evidence" value="ECO:0000315"/>
    <property type="project" value="EcoCyc"/>
</dbReference>
<dbReference type="GO" id="GO:0006974">
    <property type="term" value="P:DNA damage response"/>
    <property type="evidence" value="ECO:0000270"/>
    <property type="project" value="EcoliWiki"/>
</dbReference>
<dbReference type="FunFam" id="3.20.20.150:FF:000004">
    <property type="entry name" value="Mannonate dehydratase"/>
    <property type="match status" value="1"/>
</dbReference>
<dbReference type="FunFam" id="3.20.20.150:FF:000005">
    <property type="entry name" value="Mannonate dehydratase"/>
    <property type="match status" value="1"/>
</dbReference>
<dbReference type="Gene3D" id="3.20.20.150">
    <property type="entry name" value="Divalent-metal-dependent TIM barrel enzymes"/>
    <property type="match status" value="2"/>
</dbReference>
<dbReference type="HAMAP" id="MF_00106">
    <property type="entry name" value="UxuA"/>
    <property type="match status" value="1"/>
</dbReference>
<dbReference type="InterPro" id="IPR004628">
    <property type="entry name" value="Man_deHydtase"/>
</dbReference>
<dbReference type="InterPro" id="IPR036237">
    <property type="entry name" value="Xyl_isomerase-like_sf"/>
</dbReference>
<dbReference type="NCBIfam" id="NF003027">
    <property type="entry name" value="PRK03906.1"/>
    <property type="match status" value="1"/>
</dbReference>
<dbReference type="NCBIfam" id="TIGR00695">
    <property type="entry name" value="uxuA"/>
    <property type="match status" value="1"/>
</dbReference>
<dbReference type="PANTHER" id="PTHR30387">
    <property type="entry name" value="MANNONATE DEHYDRATASE"/>
    <property type="match status" value="1"/>
</dbReference>
<dbReference type="PANTHER" id="PTHR30387:SF2">
    <property type="entry name" value="MANNONATE DEHYDRATASE"/>
    <property type="match status" value="1"/>
</dbReference>
<dbReference type="Pfam" id="PF03786">
    <property type="entry name" value="UxuA"/>
    <property type="match status" value="1"/>
</dbReference>
<dbReference type="PIRSF" id="PIRSF016049">
    <property type="entry name" value="Man_dehyd"/>
    <property type="match status" value="1"/>
</dbReference>
<dbReference type="SUPFAM" id="SSF51658">
    <property type="entry name" value="Xylose isomerase-like"/>
    <property type="match status" value="1"/>
</dbReference>
<proteinExistence type="evidence at protein level"/>
<organism>
    <name type="scientific">Escherichia coli (strain K12)</name>
    <dbReference type="NCBI Taxonomy" id="83333"/>
    <lineage>
        <taxon>Bacteria</taxon>
        <taxon>Pseudomonadati</taxon>
        <taxon>Pseudomonadota</taxon>
        <taxon>Gammaproteobacteria</taxon>
        <taxon>Enterobacterales</taxon>
        <taxon>Enterobacteriaceae</taxon>
        <taxon>Escherichia</taxon>
    </lineage>
</organism>
<sequence>MEQTWRWYGPNDPVSLADVRQAGATGVVTALHHIPNGEVWSVEEILKRKAIIEDAGLVWSVVESVPIHEDIKTHTGNYEQWIANYQQTLRNLAQCGIRTVCYNFMPVLDWTRTDLEYVLPDGSKALRFDQIEFAAFEMHILKRPGAEADYTEEEIAQAAERFATMSDEDKARLTRNIIAGLPGAEEGYTLDQFRKHLELYKDIDKAKLRENFAVFLKAIIPVAEEVGVRMAVHPDDPPRPILGLPRIVSTIEDMQWMVDTVNSMANGFTMCTGSYGVRADNDLVDMIKQFGPRIYFTHLRSTMREDNPKTFHEAAHLNGDVDMYEVVKAIVEEEHRRKAEGKEDLIPMRPDHGHQMLDDLKKKTNPGYSAIGRLKGLAEVRGVELAIQRAFFSR</sequence>
<gene>
    <name type="primary">uxuA</name>
    <name type="ordered locus">b4322</name>
    <name type="ordered locus">JW4285</name>
</gene>
<keyword id="KW-0002">3D-structure</keyword>
<keyword id="KW-0408">Iron</keyword>
<keyword id="KW-0456">Lyase</keyword>
<keyword id="KW-0464">Manganese</keyword>
<keyword id="KW-1185">Reference proteome</keyword>
<feature type="chain" id="PRO_0000170670" description="Mannonate dehydratase">
    <location>
        <begin position="1"/>
        <end position="394"/>
    </location>
</feature>
<feature type="sequence variant" description="In strain: MT78.">
    <original>I</original>
    <variation>V</variation>
    <location>
        <position position="52"/>
    </location>
</feature>
<feature type="strand" evidence="3">
    <location>
        <begin position="3"/>
        <end position="6"/>
    </location>
</feature>
<feature type="helix" evidence="3">
    <location>
        <begin position="16"/>
        <end position="22"/>
    </location>
</feature>
<feature type="strand" evidence="3">
    <location>
        <begin position="26"/>
        <end position="29"/>
    </location>
</feature>
<feature type="helix" evidence="3">
    <location>
        <begin position="42"/>
        <end position="54"/>
    </location>
</feature>
<feature type="strand" evidence="3">
    <location>
        <begin position="58"/>
        <end position="63"/>
    </location>
</feature>
<feature type="helix" evidence="3">
    <location>
        <begin position="69"/>
        <end position="73"/>
    </location>
</feature>
<feature type="helix" evidence="3">
    <location>
        <begin position="78"/>
        <end position="94"/>
    </location>
</feature>
<feature type="strand" evidence="3">
    <location>
        <begin position="99"/>
        <end position="102"/>
    </location>
</feature>
<feature type="strand" evidence="3">
    <location>
        <begin position="113"/>
        <end position="118"/>
    </location>
</feature>
<feature type="strand" evidence="3">
    <location>
        <begin position="124"/>
        <end position="128"/>
    </location>
</feature>
<feature type="helix" evidence="3">
    <location>
        <begin position="130"/>
        <end position="139"/>
    </location>
</feature>
<feature type="helix" evidence="3">
    <location>
        <begin position="146"/>
        <end position="149"/>
    </location>
</feature>
<feature type="helix" evidence="3">
    <location>
        <begin position="152"/>
        <end position="163"/>
    </location>
</feature>
<feature type="helix" evidence="3">
    <location>
        <begin position="167"/>
        <end position="178"/>
    </location>
</feature>
<feature type="helix" evidence="3">
    <location>
        <begin position="190"/>
        <end position="198"/>
    </location>
</feature>
<feature type="turn" evidence="3">
    <location>
        <begin position="199"/>
        <end position="202"/>
    </location>
</feature>
<feature type="helix" evidence="3">
    <location>
        <begin position="205"/>
        <end position="226"/>
    </location>
</feature>
<feature type="strand" evidence="3">
    <location>
        <begin position="229"/>
        <end position="232"/>
    </location>
</feature>
<feature type="strand" evidence="3">
    <location>
        <begin position="236"/>
        <end position="239"/>
    </location>
</feature>
<feature type="strand" evidence="3">
    <location>
        <begin position="248"/>
        <end position="250"/>
    </location>
</feature>
<feature type="helix" evidence="3">
    <location>
        <begin position="251"/>
        <end position="260"/>
    </location>
</feature>
<feature type="strand" evidence="3">
    <location>
        <begin position="266"/>
        <end position="271"/>
    </location>
</feature>
<feature type="helix" evidence="3">
    <location>
        <begin position="272"/>
        <end position="275"/>
    </location>
</feature>
<feature type="helix" evidence="3">
    <location>
        <begin position="283"/>
        <end position="290"/>
    </location>
</feature>
<feature type="helix" evidence="3">
    <location>
        <begin position="291"/>
        <end position="293"/>
    </location>
</feature>
<feature type="strand" evidence="3">
    <location>
        <begin position="294"/>
        <end position="298"/>
    </location>
</feature>
<feature type="strand" evidence="3">
    <location>
        <begin position="302"/>
        <end position="304"/>
    </location>
</feature>
<feature type="strand" evidence="3">
    <location>
        <begin position="311"/>
        <end position="313"/>
    </location>
</feature>
<feature type="strand" evidence="3">
    <location>
        <begin position="318"/>
        <end position="321"/>
    </location>
</feature>
<feature type="helix" evidence="3">
    <location>
        <begin position="323"/>
        <end position="339"/>
    </location>
</feature>
<feature type="helix" evidence="3">
    <location>
        <begin position="357"/>
        <end position="361"/>
    </location>
</feature>
<feature type="helix" evidence="3">
    <location>
        <begin position="371"/>
        <end position="391"/>
    </location>
</feature>
<comment type="function">
    <text evidence="1">Catalyzes the dehydration of D-mannonate.</text>
</comment>
<comment type="catalytic activity">
    <reaction evidence="1">
        <text>D-mannonate = 2-dehydro-3-deoxy-D-gluconate + H2O</text>
        <dbReference type="Rhea" id="RHEA:20097"/>
        <dbReference type="ChEBI" id="CHEBI:15377"/>
        <dbReference type="ChEBI" id="CHEBI:17767"/>
        <dbReference type="ChEBI" id="CHEBI:57990"/>
        <dbReference type="EC" id="4.2.1.8"/>
    </reaction>
</comment>
<comment type="cofactor">
    <cofactor evidence="1">
        <name>Fe(2+)</name>
        <dbReference type="ChEBI" id="CHEBI:29033"/>
    </cofactor>
    <cofactor evidence="1">
        <name>Mn(2+)</name>
        <dbReference type="ChEBI" id="CHEBI:29035"/>
    </cofactor>
    <text evidence="1">Mn(2+) can substitute for iron, but in higher concentrations. Cannot use Fe(3+), Ni(2+) or Mg(2+).</text>
</comment>
<comment type="activity regulation">
    <text evidence="1">Is inhibited by high concentrations of Fe(2+) (&gt; 2 mM), and by EDTA or other iron chelators in vitro.</text>
</comment>
<comment type="biophysicochemical properties">
    <phDependence>
        <text evidence="1">Optimum pH is about 7.5. The activity at pH 6.5 and 8.6 is only about 20% of the maximal achievable activity at optimum pH.</text>
    </phDependence>
</comment>
<comment type="pathway">
    <text>Carbohydrate metabolism; pentose and glucuronate interconversion.</text>
</comment>
<comment type="induction">
    <text>By fructuronate. Its expression is subjected to catabolite repression by glucose.</text>
</comment>
<comment type="similarity">
    <text evidence="2">Belongs to the mannonate dehydratase family.</text>
</comment>
<reference key="1">
    <citation type="submission" date="1992-09" db="EMBL/GenBank/DDBJ databases">
        <authorList>
            <person name="Mizobuchi K."/>
        </authorList>
    </citation>
    <scope>NUCLEOTIDE SEQUENCE [GENOMIC DNA]</scope>
    <source>
        <strain>K12 / W3110 / ATCC 27325 / DSM 5911</strain>
    </source>
</reference>
<reference key="2">
    <citation type="journal article" date="1995" name="Nucleic Acids Res.">
        <title>Analysis of the Escherichia coli genome VI: DNA sequence of the region from 92.8 through 100 minutes.</title>
        <authorList>
            <person name="Burland V.D."/>
            <person name="Plunkett G. III"/>
            <person name="Sofia H.J."/>
            <person name="Daniels D.L."/>
            <person name="Blattner F.R."/>
        </authorList>
    </citation>
    <scope>NUCLEOTIDE SEQUENCE [LARGE SCALE GENOMIC DNA]</scope>
    <source>
        <strain>K12 / MG1655 / ATCC 47076</strain>
    </source>
</reference>
<reference key="3">
    <citation type="journal article" date="1997" name="Science">
        <title>The complete genome sequence of Escherichia coli K-12.</title>
        <authorList>
            <person name="Blattner F.R."/>
            <person name="Plunkett G. III"/>
            <person name="Bloch C.A."/>
            <person name="Perna N.T."/>
            <person name="Burland V."/>
            <person name="Riley M."/>
            <person name="Collado-Vides J."/>
            <person name="Glasner J.D."/>
            <person name="Rode C.K."/>
            <person name="Mayhew G.F."/>
            <person name="Gregor J."/>
            <person name="Davis N.W."/>
            <person name="Kirkpatrick H.A."/>
            <person name="Goeden M.A."/>
            <person name="Rose D.J."/>
            <person name="Mau B."/>
            <person name="Shao Y."/>
        </authorList>
    </citation>
    <scope>NUCLEOTIDE SEQUENCE [LARGE SCALE GENOMIC DNA]</scope>
    <source>
        <strain>K12 / MG1655 / ATCC 47076</strain>
    </source>
</reference>
<reference key="4">
    <citation type="journal article" date="2006" name="Mol. Syst. Biol.">
        <title>Highly accurate genome sequences of Escherichia coli K-12 strains MG1655 and W3110.</title>
        <authorList>
            <person name="Hayashi K."/>
            <person name="Morooka N."/>
            <person name="Yamamoto Y."/>
            <person name="Fujita K."/>
            <person name="Isono K."/>
            <person name="Choi S."/>
            <person name="Ohtsubo E."/>
            <person name="Baba T."/>
            <person name="Wanner B.L."/>
            <person name="Mori H."/>
            <person name="Horiuchi T."/>
        </authorList>
    </citation>
    <scope>NUCLEOTIDE SEQUENCE [LARGE SCALE GENOMIC DNA]</scope>
    <source>
        <strain>K12 / W3110 / ATCC 27325 / DSM 5911</strain>
    </source>
</reference>
<reference key="5">
    <citation type="journal article" date="1998" name="Res. Microbiol.">
        <title>Colonization ability and pathogenic properties of a fim- mutant of an avian strain of Escherichia coli.</title>
        <authorList>
            <person name="Marc D."/>
            <person name="Arne P."/>
            <person name="Bree A."/>
            <person name="Dho-Moulin M."/>
        </authorList>
    </citation>
    <scope>NUCLEOTIDE SEQUENCE [GENOMIC DNA] OF 1-128</scope>
    <source>
        <strain>O2:K1:H+ / MT78</strain>
    </source>
</reference>
<reference key="6">
    <citation type="journal article" date="1986" name="Mol. Gen. Genet.">
        <title>The regulatory region of the uxuAB operon in Escherichia coli K12.</title>
        <authorList>
            <person name="Blanco C."/>
            <person name="Ritzenthaler P."/>
            <person name="Kolb A."/>
        </authorList>
    </citation>
    <scope>PRELIMINARY NUCLEOTIDE SEQUENCE [GENOMIC DNA] OF 1-11</scope>
    <source>
        <strain>K12</strain>
    </source>
</reference>
<reference key="7">
    <citation type="journal article" date="1996" name="J. Bacteriol.">
        <title>The gntP gene of Escherichia coli involved in gluconate uptake.</title>
        <authorList>
            <person name="Klemm P."/>
            <person name="Tong S."/>
            <person name="Nielsen H."/>
            <person name="Conway T."/>
        </authorList>
    </citation>
    <scope>NUCLEOTIDE SEQUENCE [GENOMIC DNA] OF 1-10</scope>
    <source>
        <strain>K12</strain>
    </source>
</reference>
<reference key="8">
    <citation type="journal article" date="1987" name="Eur. J. Biochem.">
        <title>The role of iron in the activation of mannonic and altronic acid hydratases, two Fe-requiring hydro-lyases.</title>
        <authorList>
            <person name="Dreyer J.L."/>
        </authorList>
    </citation>
    <scope>FUNCTION</scope>
    <scope>CATALYTIC ACTIVITY</scope>
    <scope>COFACTOR</scope>
    <scope>PH DEPENDENCE</scope>
    <scope>ACTIVITY REGULATION</scope>
    <source>
        <strain>K12</strain>
    </source>
</reference>
<evidence type="ECO:0000269" key="1">
    <source>
    </source>
</evidence>
<evidence type="ECO:0000305" key="2"/>
<evidence type="ECO:0007829" key="3">
    <source>
        <dbReference type="PDB" id="4EAC"/>
    </source>
</evidence>